<feature type="chain" id="PRO_1000011713" description="GTPase Der">
    <location>
        <begin position="1"/>
        <end position="473"/>
    </location>
</feature>
<feature type="domain" description="EngA-type G 1">
    <location>
        <begin position="3"/>
        <end position="167"/>
    </location>
</feature>
<feature type="domain" description="EngA-type G 2">
    <location>
        <begin position="203"/>
        <end position="378"/>
    </location>
</feature>
<feature type="domain" description="KH-like" evidence="1">
    <location>
        <begin position="379"/>
        <end position="463"/>
    </location>
</feature>
<feature type="binding site" evidence="1">
    <location>
        <begin position="9"/>
        <end position="16"/>
    </location>
    <ligand>
        <name>GTP</name>
        <dbReference type="ChEBI" id="CHEBI:37565"/>
        <label>1</label>
    </ligand>
</feature>
<feature type="binding site" evidence="1">
    <location>
        <begin position="56"/>
        <end position="60"/>
    </location>
    <ligand>
        <name>GTP</name>
        <dbReference type="ChEBI" id="CHEBI:37565"/>
        <label>1</label>
    </ligand>
</feature>
<feature type="binding site" evidence="1">
    <location>
        <begin position="119"/>
        <end position="122"/>
    </location>
    <ligand>
        <name>GTP</name>
        <dbReference type="ChEBI" id="CHEBI:37565"/>
        <label>1</label>
    </ligand>
</feature>
<feature type="binding site" evidence="1">
    <location>
        <begin position="209"/>
        <end position="216"/>
    </location>
    <ligand>
        <name>GTP</name>
        <dbReference type="ChEBI" id="CHEBI:37565"/>
        <label>2</label>
    </ligand>
</feature>
<feature type="binding site" evidence="1">
    <location>
        <begin position="256"/>
        <end position="260"/>
    </location>
    <ligand>
        <name>GTP</name>
        <dbReference type="ChEBI" id="CHEBI:37565"/>
        <label>2</label>
    </ligand>
</feature>
<feature type="binding site" evidence="1">
    <location>
        <begin position="321"/>
        <end position="324"/>
    </location>
    <ligand>
        <name>GTP</name>
        <dbReference type="ChEBI" id="CHEBI:37565"/>
        <label>2</label>
    </ligand>
</feature>
<dbReference type="EMBL" id="CP000133">
    <property type="protein sequence ID" value="ABC91874.1"/>
    <property type="molecule type" value="Genomic_DNA"/>
</dbReference>
<dbReference type="RefSeq" id="WP_011426344.1">
    <property type="nucleotide sequence ID" value="NC_007761.1"/>
</dbReference>
<dbReference type="SMR" id="Q2K5L2"/>
<dbReference type="KEGG" id="ret:RHE_CH03108"/>
<dbReference type="eggNOG" id="COG1160">
    <property type="taxonomic scope" value="Bacteria"/>
</dbReference>
<dbReference type="HOGENOM" id="CLU_016077_5_0_5"/>
<dbReference type="OrthoDB" id="9805918at2"/>
<dbReference type="Proteomes" id="UP000001936">
    <property type="component" value="Chromosome"/>
</dbReference>
<dbReference type="GO" id="GO:0005525">
    <property type="term" value="F:GTP binding"/>
    <property type="evidence" value="ECO:0007669"/>
    <property type="project" value="UniProtKB-UniRule"/>
</dbReference>
<dbReference type="GO" id="GO:0042254">
    <property type="term" value="P:ribosome biogenesis"/>
    <property type="evidence" value="ECO:0007669"/>
    <property type="project" value="UniProtKB-KW"/>
</dbReference>
<dbReference type="CDD" id="cd01894">
    <property type="entry name" value="EngA1"/>
    <property type="match status" value="1"/>
</dbReference>
<dbReference type="CDD" id="cd01895">
    <property type="entry name" value="EngA2"/>
    <property type="match status" value="1"/>
</dbReference>
<dbReference type="FunFam" id="3.30.300.20:FF:000004">
    <property type="entry name" value="GTPase Der"/>
    <property type="match status" value="1"/>
</dbReference>
<dbReference type="FunFam" id="3.40.50.300:FF:000057">
    <property type="entry name" value="GTPase Der"/>
    <property type="match status" value="1"/>
</dbReference>
<dbReference type="Gene3D" id="3.30.300.20">
    <property type="match status" value="1"/>
</dbReference>
<dbReference type="Gene3D" id="3.40.50.300">
    <property type="entry name" value="P-loop containing nucleotide triphosphate hydrolases"/>
    <property type="match status" value="2"/>
</dbReference>
<dbReference type="HAMAP" id="MF_00195">
    <property type="entry name" value="GTPase_Der"/>
    <property type="match status" value="1"/>
</dbReference>
<dbReference type="InterPro" id="IPR031166">
    <property type="entry name" value="G_ENGA"/>
</dbReference>
<dbReference type="InterPro" id="IPR006073">
    <property type="entry name" value="GTP-bd"/>
</dbReference>
<dbReference type="InterPro" id="IPR016484">
    <property type="entry name" value="GTPase_Der"/>
</dbReference>
<dbReference type="InterPro" id="IPR032859">
    <property type="entry name" value="KH_dom-like"/>
</dbReference>
<dbReference type="InterPro" id="IPR015946">
    <property type="entry name" value="KH_dom-like_a/b"/>
</dbReference>
<dbReference type="InterPro" id="IPR027417">
    <property type="entry name" value="P-loop_NTPase"/>
</dbReference>
<dbReference type="InterPro" id="IPR005225">
    <property type="entry name" value="Small_GTP-bd"/>
</dbReference>
<dbReference type="NCBIfam" id="TIGR03594">
    <property type="entry name" value="GTPase_EngA"/>
    <property type="match status" value="1"/>
</dbReference>
<dbReference type="NCBIfam" id="TIGR00231">
    <property type="entry name" value="small_GTP"/>
    <property type="match status" value="2"/>
</dbReference>
<dbReference type="PANTHER" id="PTHR43834">
    <property type="entry name" value="GTPASE DER"/>
    <property type="match status" value="1"/>
</dbReference>
<dbReference type="PANTHER" id="PTHR43834:SF6">
    <property type="entry name" value="GTPASE DER"/>
    <property type="match status" value="1"/>
</dbReference>
<dbReference type="Pfam" id="PF14714">
    <property type="entry name" value="KH_dom-like"/>
    <property type="match status" value="1"/>
</dbReference>
<dbReference type="Pfam" id="PF01926">
    <property type="entry name" value="MMR_HSR1"/>
    <property type="match status" value="2"/>
</dbReference>
<dbReference type="PIRSF" id="PIRSF006485">
    <property type="entry name" value="GTP-binding_EngA"/>
    <property type="match status" value="1"/>
</dbReference>
<dbReference type="PRINTS" id="PR00326">
    <property type="entry name" value="GTP1OBG"/>
</dbReference>
<dbReference type="SUPFAM" id="SSF52540">
    <property type="entry name" value="P-loop containing nucleoside triphosphate hydrolases"/>
    <property type="match status" value="2"/>
</dbReference>
<dbReference type="PROSITE" id="PS51712">
    <property type="entry name" value="G_ENGA"/>
    <property type="match status" value="2"/>
</dbReference>
<comment type="function">
    <text evidence="1">GTPase that plays an essential role in the late steps of ribosome biogenesis.</text>
</comment>
<comment type="subunit">
    <text evidence="1">Associates with the 50S ribosomal subunit.</text>
</comment>
<comment type="similarity">
    <text evidence="1">Belongs to the TRAFAC class TrmE-Era-EngA-EngB-Septin-like GTPase superfamily. EngA (Der) GTPase family.</text>
</comment>
<reference key="1">
    <citation type="journal article" date="2006" name="Proc. Natl. Acad. Sci. U.S.A.">
        <title>The partitioned Rhizobium etli genome: genetic and metabolic redundancy in seven interacting replicons.</title>
        <authorList>
            <person name="Gonzalez V."/>
            <person name="Santamaria R.I."/>
            <person name="Bustos P."/>
            <person name="Hernandez-Gonzalez I."/>
            <person name="Medrano-Soto A."/>
            <person name="Moreno-Hagelsieb G."/>
            <person name="Janga S.C."/>
            <person name="Ramirez M.A."/>
            <person name="Jimenez-Jacinto V."/>
            <person name="Collado-Vides J."/>
            <person name="Davila G."/>
        </authorList>
    </citation>
    <scope>NUCLEOTIDE SEQUENCE [LARGE SCALE GENOMIC DNA]</scope>
    <source>
        <strain>ATCC 51251 / DSM 11541 / JCM 21823 / NBRC 15573 / CFN 42</strain>
    </source>
</reference>
<sequence length="473" mass="52667">MSFTVAIVGRPNVGKSTLFNRLVGKKLALVDDTPGVTRDRRPGDARLMGLTFTIIDTAGLEEADEESLQGRMRAQTEAAIDEADLSLFVVDAKNGLTPVDTALAEMLRRRGKPVVLVANKSEARGSDSGFYDAYTLGLGEPTPISAEHGQGMLDLRDAIVEAIGKDRAYAKEDVAVTDVDIPPSENEADGEDEEPAYDETKPLRVAIVGRPNAGKSTLINRFLGEDRLLTGPEAGITRDSISVEWDWRGRTIKMFDTAGMRRKARVTEKLEKLSVADALRAIRFAETVVIVFDATIPFEKQDLQIVDLVLREGRAAVLAFNKWDMIEDRQAVLADLREKTDRLLPQARGIRAVPISGQTGWGLDKLMQSIIDTDRVWNKRISTARLNRWLETQQIQHPPPAVSGRRIKLKYMTQVKARPPAFMISCTRSDALPESYTRYLINGLRADFDMPSVPIRIHFRSPDNPFESKKKRT</sequence>
<proteinExistence type="inferred from homology"/>
<accession>Q2K5L2</accession>
<organism>
    <name type="scientific">Rhizobium etli (strain ATCC 51251 / DSM 11541 / JCM 21823 / NBRC 15573 / CFN 42)</name>
    <dbReference type="NCBI Taxonomy" id="347834"/>
    <lineage>
        <taxon>Bacteria</taxon>
        <taxon>Pseudomonadati</taxon>
        <taxon>Pseudomonadota</taxon>
        <taxon>Alphaproteobacteria</taxon>
        <taxon>Hyphomicrobiales</taxon>
        <taxon>Rhizobiaceae</taxon>
        <taxon>Rhizobium/Agrobacterium group</taxon>
        <taxon>Rhizobium</taxon>
    </lineage>
</organism>
<gene>
    <name evidence="1" type="primary">der</name>
    <name type="synonym">engA</name>
    <name type="ordered locus">RHE_CH03108</name>
</gene>
<protein>
    <recommendedName>
        <fullName evidence="1">GTPase Der</fullName>
    </recommendedName>
    <alternativeName>
        <fullName evidence="1">GTP-binding protein EngA</fullName>
    </alternativeName>
</protein>
<keyword id="KW-0342">GTP-binding</keyword>
<keyword id="KW-0547">Nucleotide-binding</keyword>
<keyword id="KW-1185">Reference proteome</keyword>
<keyword id="KW-0677">Repeat</keyword>
<keyword id="KW-0690">Ribosome biogenesis</keyword>
<evidence type="ECO:0000255" key="1">
    <source>
        <dbReference type="HAMAP-Rule" id="MF_00195"/>
    </source>
</evidence>
<name>DER_RHIEC</name>